<gene>
    <name evidence="3 9 11" type="primary">IGKV1-37</name>
</gene>
<comment type="function">
    <text evidence="4 5 6 7 8">Probable non-functional open reading frame (ORF) of V region of the variable domain of immunoglobulin light chains (PubMed:24600447). Non-functional ORF generally cannot participate in the synthesis of a productive immunoglobulin chain due to altered V-(D)-J or switch recombination and/or splicing site (at mRNA level) and/or conserved amino acid change (protein level) (PubMed:9619395). Immunoglobulins, also known as antibodies, are membrane-bound or secreted glycoproteins produced by B lymphocytes. In the recognition phase of humoral immunity, the membrane-bound immunoglobulins serve as receptors which, upon binding of a specific antigen, trigger the clonal expansion and differentiation of B lymphocytes into immunoglobulins-secreting plasma cells. Secreted immunoglobulins mediate the effector phase of humoral immunity, which results in the elimination of bound antigens (PubMed:20176268, PubMed:22158414). The antigen binding site is formed by the variable domain of one heavy chain, together with that of its associated light chain. Thus, each immunoglobulin has two antigen binding sites with remarkable affinity for a particular antigen. The variable domains are assembled by a process called V-(D)-J rearrangement and can then be subjected to somatic hypermutations which, after exposure to antigen and selection, allow affinity maturation for a particular antigen (PubMed:17576170, PubMed:20176268).</text>
</comment>
<comment type="subunit">
    <text evidence="5 10">Most probably, the immunoglobulin is not assembled due to incorrect folding of light chain (Probable). Immunoglobulins are composed of two identical heavy chains and two identical light chains; disulfide-linked.</text>
</comment>
<comment type="subcellular location">
    <subcellularLocation>
        <location evidence="5 6">Secreted</location>
    </subcellularLocation>
    <subcellularLocation>
        <location evidence="5 6">Cell membrane</location>
    </subcellularLocation>
</comment>
<comment type="polymorphism">
    <text evidence="10">There are several alleles. The sequence shown is that of IMGT allele IGKV1-37*01.</text>
</comment>
<comment type="caution">
    <text evidence="8 10">Most probably a non-functional protein that cannot participate in the synthesis of a productive immunoglobulin chain due to a mutation at position 110, corresponding to the second cysteine from the disulfide bridge, potentially leading to uncorrect folding (PubMed:9619395).</text>
</comment>
<name>KV137_HUMAN</name>
<evidence type="ECO:0000255" key="1"/>
<evidence type="ECO:0000255" key="2">
    <source>
        <dbReference type="PROSITE-ProRule" id="PRU00114"/>
    </source>
</evidence>
<evidence type="ECO:0000303" key="3">
    <source>
    </source>
</evidence>
<evidence type="ECO:0000303" key="4">
    <source>
    </source>
</evidence>
<evidence type="ECO:0000303" key="5">
    <source>
    </source>
</evidence>
<evidence type="ECO:0000303" key="6">
    <source>
    </source>
</evidence>
<evidence type="ECO:0000303" key="7">
    <source>
    </source>
</evidence>
<evidence type="ECO:0000303" key="8">
    <source>
    </source>
</evidence>
<evidence type="ECO:0000303" key="9">
    <source ref="4"/>
</evidence>
<evidence type="ECO:0000305" key="10"/>
<evidence type="ECO:0000312" key="11">
    <source>
        <dbReference type="HGNC" id="HGNC:5739"/>
    </source>
</evidence>
<feature type="signal peptide" evidence="1">
    <location>
        <begin position="1"/>
        <end position="22"/>
    </location>
</feature>
<feature type="chain" id="PRO_5014011168" description="Probable non-functional immunoglobulinn kappa variable 1-37" evidence="1">
    <location>
        <begin position="23"/>
        <end position="117"/>
    </location>
</feature>
<feature type="domain" description="Ig-like" evidence="2">
    <location>
        <begin position="24"/>
        <end position="117" status="greater than"/>
    </location>
</feature>
<feature type="non-terminal residue">
    <location>
        <position position="117"/>
    </location>
</feature>
<protein>
    <recommendedName>
        <fullName evidence="10">Probable non-functional immunoglobulinn kappa variable 1-37</fullName>
    </recommendedName>
</protein>
<sequence length="117" mass="12688">MDMRVPAQLLGLLLLWVPGARCDIQLTQSPSSLSASVGDRVTITCRVSQGISSYLNWYRQKPGKVPKLLIYSASNLQSGVPSRFSGSGSGTDFTLTISSLQPEDVATYYGQRTYNAP</sequence>
<organism>
    <name type="scientific">Homo sapiens</name>
    <name type="common">Human</name>
    <dbReference type="NCBI Taxonomy" id="9606"/>
    <lineage>
        <taxon>Eukaryota</taxon>
        <taxon>Metazoa</taxon>
        <taxon>Chordata</taxon>
        <taxon>Craniata</taxon>
        <taxon>Vertebrata</taxon>
        <taxon>Euteleostomi</taxon>
        <taxon>Mammalia</taxon>
        <taxon>Eutheria</taxon>
        <taxon>Euarchontoglires</taxon>
        <taxon>Primates</taxon>
        <taxon>Haplorrhini</taxon>
        <taxon>Catarrhini</taxon>
        <taxon>Hominidae</taxon>
        <taxon>Homo</taxon>
    </lineage>
</organism>
<reference key="1">
    <citation type="journal article" date="2005" name="Nature">
        <title>Generation and annotation of the DNA sequences of human chromosomes 2 and 4.</title>
        <authorList>
            <person name="Hillier L.W."/>
            <person name="Graves T.A."/>
            <person name="Fulton R.S."/>
            <person name="Fulton L.A."/>
            <person name="Pepin K.H."/>
            <person name="Minx P."/>
            <person name="Wagner-McPherson C."/>
            <person name="Layman D."/>
            <person name="Wylie K."/>
            <person name="Sekhon M."/>
            <person name="Becker M.C."/>
            <person name="Fewell G.A."/>
            <person name="Delehaunty K.D."/>
            <person name="Miner T.L."/>
            <person name="Nash W.E."/>
            <person name="Kremitzki C."/>
            <person name="Oddy L."/>
            <person name="Du H."/>
            <person name="Sun H."/>
            <person name="Bradshaw-Cordum H."/>
            <person name="Ali J."/>
            <person name="Carter J."/>
            <person name="Cordes M."/>
            <person name="Harris A."/>
            <person name="Isak A."/>
            <person name="van Brunt A."/>
            <person name="Nguyen C."/>
            <person name="Du F."/>
            <person name="Courtney L."/>
            <person name="Kalicki J."/>
            <person name="Ozersky P."/>
            <person name="Abbott S."/>
            <person name="Armstrong J."/>
            <person name="Belter E.A."/>
            <person name="Caruso L."/>
            <person name="Cedroni M."/>
            <person name="Cotton M."/>
            <person name="Davidson T."/>
            <person name="Desai A."/>
            <person name="Elliott G."/>
            <person name="Erb T."/>
            <person name="Fronick C."/>
            <person name="Gaige T."/>
            <person name="Haakenson W."/>
            <person name="Haglund K."/>
            <person name="Holmes A."/>
            <person name="Harkins R."/>
            <person name="Kim K."/>
            <person name="Kruchowski S.S."/>
            <person name="Strong C.M."/>
            <person name="Grewal N."/>
            <person name="Goyea E."/>
            <person name="Hou S."/>
            <person name="Levy A."/>
            <person name="Martinka S."/>
            <person name="Mead K."/>
            <person name="McLellan M.D."/>
            <person name="Meyer R."/>
            <person name="Randall-Maher J."/>
            <person name="Tomlinson C."/>
            <person name="Dauphin-Kohlberg S."/>
            <person name="Kozlowicz-Reilly A."/>
            <person name="Shah N."/>
            <person name="Swearengen-Shahid S."/>
            <person name="Snider J."/>
            <person name="Strong J.T."/>
            <person name="Thompson J."/>
            <person name="Yoakum M."/>
            <person name="Leonard S."/>
            <person name="Pearman C."/>
            <person name="Trani L."/>
            <person name="Radionenko M."/>
            <person name="Waligorski J.E."/>
            <person name="Wang C."/>
            <person name="Rock S.M."/>
            <person name="Tin-Wollam A.-M."/>
            <person name="Maupin R."/>
            <person name="Latreille P."/>
            <person name="Wendl M.C."/>
            <person name="Yang S.-P."/>
            <person name="Pohl C."/>
            <person name="Wallis J.W."/>
            <person name="Spieth J."/>
            <person name="Bieri T.A."/>
            <person name="Berkowicz N."/>
            <person name="Nelson J.O."/>
            <person name="Osborne J."/>
            <person name="Ding L."/>
            <person name="Meyer R."/>
            <person name="Sabo A."/>
            <person name="Shotland Y."/>
            <person name="Sinha P."/>
            <person name="Wohldmann P.E."/>
            <person name="Cook L.L."/>
            <person name="Hickenbotham M.T."/>
            <person name="Eldred J."/>
            <person name="Williams D."/>
            <person name="Jones T.A."/>
            <person name="She X."/>
            <person name="Ciccarelli F.D."/>
            <person name="Izaurralde E."/>
            <person name="Taylor J."/>
            <person name="Schmutz J."/>
            <person name="Myers R.M."/>
            <person name="Cox D.R."/>
            <person name="Huang X."/>
            <person name="McPherson J.D."/>
            <person name="Mardis E.R."/>
            <person name="Clifton S.W."/>
            <person name="Warren W.C."/>
            <person name="Chinwalla A.T."/>
            <person name="Eddy S.R."/>
            <person name="Marra M.A."/>
            <person name="Ovcharenko I."/>
            <person name="Furey T.S."/>
            <person name="Miller W."/>
            <person name="Eichler E.E."/>
            <person name="Bork P."/>
            <person name="Suyama M."/>
            <person name="Torrents D."/>
            <person name="Waterston R.H."/>
            <person name="Wilson R.K."/>
        </authorList>
    </citation>
    <scope>NUCLEOTIDE SEQUENCE [LARGE SCALE GENOMIC DNA] (IMGT ALLELE IGKV1-37*01)</scope>
</reference>
<reference key="2">
    <citation type="journal article" date="1998" name="Exp. Clin. Immunogenet.">
        <title>IMGT (ImMunoGeneTics) locus on focus. A new section of Experimental and Clinical Immunogenetics.</title>
        <authorList>
            <person name="Lefranc M.P."/>
        </authorList>
    </citation>
    <scope>CHARACTERIZATION</scope>
</reference>
<reference key="3">
    <citation type="journal article" date="2001" name="Exp. Clin. Immunogenet.">
        <title>Nomenclature of the human immunoglobulin heavy (IGH) genes.</title>
        <authorList>
            <person name="Lefranc M.P."/>
        </authorList>
    </citation>
    <scope>NOMENCLATURE</scope>
</reference>
<reference key="4">
    <citation type="book" date="2001" name="The Immunoglobulin FactsBook.">
        <title>The Immunoglobulin FactsBook.</title>
        <editorList>
            <person name="Lefranc M.P."/>
            <person name="Lefranc G."/>
        </editorList>
        <authorList>
            <person name="Lefranc M.P."/>
            <person name="Lefranc G."/>
        </authorList>
    </citation>
    <scope>NOMENCLATURE</scope>
</reference>
<reference key="5">
    <citation type="journal article" date="2007" name="Annu. Rev. Genet.">
        <title>Immunoglobulin somatic hypermutation.</title>
        <authorList>
            <person name="Teng G."/>
            <person name="Papavasiliou F.N."/>
        </authorList>
    </citation>
    <scope>REVIEW ON SOMATIC HYPERMUTATION</scope>
</reference>
<reference key="6">
    <citation type="journal article" date="2010" name="J. Allergy Clin. Immunol.">
        <title>Structure and function of immunoglobulins.</title>
        <authorList>
            <person name="Schroeder H.W. Jr."/>
            <person name="Cavacini L."/>
        </authorList>
    </citation>
    <scope>REVIEW ON IMMUNOGLOBULINS</scope>
</reference>
<reference key="7">
    <citation type="journal article" date="2012" name="Nat. Rev. Immunol.">
        <title>Molecular programming of B cell memory.</title>
        <authorList>
            <person name="McHeyzer-Williams M."/>
            <person name="Okitsu S."/>
            <person name="Wang N."/>
            <person name="McHeyzer-Williams L."/>
        </authorList>
    </citation>
    <scope>REVIEW ON FUNCTION</scope>
</reference>
<reference key="8">
    <citation type="journal article" date="2014" name="Front. Immunol.">
        <title>Immunoglobulin and T Cell Receptor Genes: IMGT((R)) and the Birth and Rise of Immunoinformatics.</title>
        <authorList>
            <person name="Lefranc M.P."/>
        </authorList>
    </citation>
    <scope>NOMENCLATURE</scope>
</reference>
<accession>A0A075B6S9</accession>
<accession>A0A0A0MT75</accession>
<accession>A0A0E3D6N1</accession>
<accession>A0A0U1RVJ2</accession>
<proteinExistence type="evidence at protein level"/>
<dbReference type="EMBL" id="AC244255">
    <property type="status" value="NOT_ANNOTATED_CDS"/>
    <property type="molecule type" value="Genomic_DNA"/>
</dbReference>
<dbReference type="SMR" id="A0A075B6S9"/>
<dbReference type="FunCoup" id="A0A075B6S9">
    <property type="interactions" value="292"/>
</dbReference>
<dbReference type="BioMuta" id="IGKV1-37"/>
<dbReference type="jPOST" id="A0A075B6S9"/>
<dbReference type="MassIVE" id="A0A075B6S9"/>
<dbReference type="Ensembl" id="ENST00000465170.1">
    <property type="protein sequence ID" value="ENSP00000417427.1"/>
    <property type="gene ID" value="ENSG00000239862.1"/>
</dbReference>
<dbReference type="Ensembl" id="ENST00000632103.1">
    <property type="protein sequence ID" value="ENSP00000487793.1"/>
    <property type="gene ID" value="ENSG00000282394.1"/>
</dbReference>
<dbReference type="UCSC" id="uc061lrc.1">
    <property type="organism name" value="human"/>
</dbReference>
<dbReference type="UCSC" id="uc061lrk.1">
    <property type="organism name" value="human"/>
</dbReference>
<dbReference type="AGR" id="HGNC:5739"/>
<dbReference type="GeneCards" id="IGKV1-37"/>
<dbReference type="HGNC" id="HGNC:5739">
    <property type="gene designation" value="IGKV1-37"/>
</dbReference>
<dbReference type="HPA" id="ENSG00000239862">
    <property type="expression patterns" value="Tissue enhanced (intestine, lymphoid tissue, urinary bladder)"/>
</dbReference>
<dbReference type="neXtProt" id="NX_A0A075B6S9"/>
<dbReference type="VEuPathDB" id="HostDB:ENSG00000239862"/>
<dbReference type="HOGENOM" id="CLU_077975_4_1_1"/>
<dbReference type="InParanoid" id="A0A075B6S9"/>
<dbReference type="OMA" id="KQFTHTI"/>
<dbReference type="OrthoDB" id="9629570at2759"/>
<dbReference type="PAN-GO" id="A0A075B6S9">
    <property type="GO annotations" value="3 GO annotations based on evolutionary models"/>
</dbReference>
<dbReference type="PhylomeDB" id="A0A075B6S9"/>
<dbReference type="PRO" id="PR:A0A075B6S9"/>
<dbReference type="Proteomes" id="UP000005640">
    <property type="component" value="Chromosome 2"/>
</dbReference>
<dbReference type="RNAct" id="A0A075B6S9">
    <property type="molecule type" value="protein"/>
</dbReference>
<dbReference type="Bgee" id="ENSG00000239862">
    <property type="expression patterns" value="Expressed in rectum and 62 other cell types or tissues"/>
</dbReference>
<dbReference type="GO" id="GO:0005576">
    <property type="term" value="C:extracellular region"/>
    <property type="evidence" value="ECO:0007669"/>
    <property type="project" value="UniProtKB-SubCell"/>
</dbReference>
<dbReference type="GO" id="GO:0019814">
    <property type="term" value="C:immunoglobulin complex"/>
    <property type="evidence" value="ECO:0000318"/>
    <property type="project" value="GO_Central"/>
</dbReference>
<dbReference type="GO" id="GO:0005886">
    <property type="term" value="C:plasma membrane"/>
    <property type="evidence" value="ECO:0007669"/>
    <property type="project" value="UniProtKB-SubCell"/>
</dbReference>
<dbReference type="GO" id="GO:0002250">
    <property type="term" value="P:adaptive immune response"/>
    <property type="evidence" value="ECO:0007669"/>
    <property type="project" value="UniProtKB-KW"/>
</dbReference>
<dbReference type="GO" id="GO:0006955">
    <property type="term" value="P:immune response"/>
    <property type="evidence" value="ECO:0000318"/>
    <property type="project" value="GO_Central"/>
</dbReference>
<dbReference type="FunFam" id="2.60.40.10:FF:000212">
    <property type="entry name" value="Immunoglobulin kappa chain variable 12-38"/>
    <property type="match status" value="1"/>
</dbReference>
<dbReference type="Gene3D" id="2.60.40.10">
    <property type="entry name" value="Immunoglobulins"/>
    <property type="match status" value="1"/>
</dbReference>
<dbReference type="InterPro" id="IPR007110">
    <property type="entry name" value="Ig-like_dom"/>
</dbReference>
<dbReference type="InterPro" id="IPR036179">
    <property type="entry name" value="Ig-like_dom_sf"/>
</dbReference>
<dbReference type="InterPro" id="IPR013783">
    <property type="entry name" value="Ig-like_fold"/>
</dbReference>
<dbReference type="InterPro" id="IPR013106">
    <property type="entry name" value="Ig_V-set"/>
</dbReference>
<dbReference type="InterPro" id="IPR050150">
    <property type="entry name" value="IgV_Light_Chain"/>
</dbReference>
<dbReference type="PANTHER" id="PTHR23267">
    <property type="entry name" value="IMMUNOGLOBULIN LIGHT CHAIN"/>
    <property type="match status" value="1"/>
</dbReference>
<dbReference type="Pfam" id="PF07686">
    <property type="entry name" value="V-set"/>
    <property type="match status" value="1"/>
</dbReference>
<dbReference type="SMART" id="SM00406">
    <property type="entry name" value="IGv"/>
    <property type="match status" value="1"/>
</dbReference>
<dbReference type="SUPFAM" id="SSF48726">
    <property type="entry name" value="Immunoglobulin"/>
    <property type="match status" value="1"/>
</dbReference>
<dbReference type="PROSITE" id="PS50835">
    <property type="entry name" value="IG_LIKE"/>
    <property type="match status" value="1"/>
</dbReference>
<keyword id="KW-1064">Adaptive immunity</keyword>
<keyword id="KW-1003">Cell membrane</keyword>
<keyword id="KW-0391">Immunity</keyword>
<keyword id="KW-1280">Immunoglobulin</keyword>
<keyword id="KW-0393">Immunoglobulin domain</keyword>
<keyword id="KW-0472">Membrane</keyword>
<keyword id="KW-1185">Reference proteome</keyword>
<keyword id="KW-0964">Secreted</keyword>
<keyword id="KW-0732">Signal</keyword>